<keyword id="KW-0021">Allosteric enzyme</keyword>
<keyword id="KW-0067">ATP-binding</keyword>
<keyword id="KW-0963">Cytoplasm</keyword>
<keyword id="KW-0324">Glycolysis</keyword>
<keyword id="KW-0418">Kinase</keyword>
<keyword id="KW-0460">Magnesium</keyword>
<keyword id="KW-0479">Metal-binding</keyword>
<keyword id="KW-0547">Nucleotide-binding</keyword>
<keyword id="KW-0808">Transferase</keyword>
<sequence>MIKKIGVLTSGGDSPGMNAAIRGVVRAGLSEGLEVYGIYDGYLGLFQDRIAKLDRYSVSDMINRGGTFLGSARFPEFREEGTRAIAIENMTKRGLDALVVIGGDGSYMGAKRLTEMGFPCIGLPGTIDNDVAGTDYTIGYFTALETVVEAIDRLRDTSTSHQRISIVEVMGRYCGDLTMAAAIAGGCEFIVLPEVEFKPEDLVYEIKAGIAKGKKHAIVAITEYICNVAELAQYIEKETGRETRATVLGHIQRGGRPVAYDRILASLMGAYSIELLLQGYGGRCVGVQNERLVHHDIVDAIENMKRPFRSNILETAKKLF</sequence>
<reference key="1">
    <citation type="journal article" date="2006" name="Genome Res.">
        <title>Massive genome erosion and functional adaptations provide insights into the symbiotic lifestyle of Sodalis glossinidius in the tsetse host.</title>
        <authorList>
            <person name="Toh H."/>
            <person name="Weiss B.L."/>
            <person name="Perkin S.A.H."/>
            <person name="Yamashita A."/>
            <person name="Oshima K."/>
            <person name="Hattori M."/>
            <person name="Aksoy S."/>
        </authorList>
    </citation>
    <scope>NUCLEOTIDE SEQUENCE [LARGE SCALE GENOMIC DNA]</scope>
    <source>
        <strain>morsitans</strain>
    </source>
</reference>
<dbReference type="EC" id="2.7.1.11" evidence="1"/>
<dbReference type="EMBL" id="AP008232">
    <property type="protein sequence ID" value="BAE75453.1"/>
    <property type="molecule type" value="Genomic_DNA"/>
</dbReference>
<dbReference type="RefSeq" id="WP_011411990.1">
    <property type="nucleotide sequence ID" value="NC_007712.1"/>
</dbReference>
<dbReference type="SMR" id="Q2NQX2"/>
<dbReference type="STRING" id="343509.SG2178"/>
<dbReference type="KEGG" id="sgl:SG2178"/>
<dbReference type="eggNOG" id="COG0205">
    <property type="taxonomic scope" value="Bacteria"/>
</dbReference>
<dbReference type="HOGENOM" id="CLU_020655_0_1_6"/>
<dbReference type="OrthoDB" id="9802503at2"/>
<dbReference type="BioCyc" id="SGLO343509:SGP1_RS20075-MONOMER"/>
<dbReference type="UniPathway" id="UPA00109">
    <property type="reaction ID" value="UER00182"/>
</dbReference>
<dbReference type="Proteomes" id="UP000001932">
    <property type="component" value="Chromosome"/>
</dbReference>
<dbReference type="GO" id="GO:0005945">
    <property type="term" value="C:6-phosphofructokinase complex"/>
    <property type="evidence" value="ECO:0007669"/>
    <property type="project" value="TreeGrafter"/>
</dbReference>
<dbReference type="GO" id="GO:0003872">
    <property type="term" value="F:6-phosphofructokinase activity"/>
    <property type="evidence" value="ECO:0007669"/>
    <property type="project" value="UniProtKB-UniRule"/>
</dbReference>
<dbReference type="GO" id="GO:0016208">
    <property type="term" value="F:AMP binding"/>
    <property type="evidence" value="ECO:0007669"/>
    <property type="project" value="TreeGrafter"/>
</dbReference>
<dbReference type="GO" id="GO:0005524">
    <property type="term" value="F:ATP binding"/>
    <property type="evidence" value="ECO:0007669"/>
    <property type="project" value="UniProtKB-KW"/>
</dbReference>
<dbReference type="GO" id="GO:0070095">
    <property type="term" value="F:fructose-6-phosphate binding"/>
    <property type="evidence" value="ECO:0007669"/>
    <property type="project" value="TreeGrafter"/>
</dbReference>
<dbReference type="GO" id="GO:0042802">
    <property type="term" value="F:identical protein binding"/>
    <property type="evidence" value="ECO:0007669"/>
    <property type="project" value="TreeGrafter"/>
</dbReference>
<dbReference type="GO" id="GO:0046872">
    <property type="term" value="F:metal ion binding"/>
    <property type="evidence" value="ECO:0007669"/>
    <property type="project" value="UniProtKB-KW"/>
</dbReference>
<dbReference type="GO" id="GO:0048029">
    <property type="term" value="F:monosaccharide binding"/>
    <property type="evidence" value="ECO:0007669"/>
    <property type="project" value="TreeGrafter"/>
</dbReference>
<dbReference type="GO" id="GO:0061621">
    <property type="term" value="P:canonical glycolysis"/>
    <property type="evidence" value="ECO:0007669"/>
    <property type="project" value="TreeGrafter"/>
</dbReference>
<dbReference type="GO" id="GO:0030388">
    <property type="term" value="P:fructose 1,6-bisphosphate metabolic process"/>
    <property type="evidence" value="ECO:0007669"/>
    <property type="project" value="TreeGrafter"/>
</dbReference>
<dbReference type="GO" id="GO:0006002">
    <property type="term" value="P:fructose 6-phosphate metabolic process"/>
    <property type="evidence" value="ECO:0007669"/>
    <property type="project" value="InterPro"/>
</dbReference>
<dbReference type="CDD" id="cd00763">
    <property type="entry name" value="Bacterial_PFK"/>
    <property type="match status" value="1"/>
</dbReference>
<dbReference type="FunFam" id="3.40.50.450:FF:000001">
    <property type="entry name" value="ATP-dependent 6-phosphofructokinase"/>
    <property type="match status" value="1"/>
</dbReference>
<dbReference type="FunFam" id="3.40.50.460:FF:000002">
    <property type="entry name" value="ATP-dependent 6-phosphofructokinase"/>
    <property type="match status" value="1"/>
</dbReference>
<dbReference type="Gene3D" id="3.40.50.450">
    <property type="match status" value="1"/>
</dbReference>
<dbReference type="Gene3D" id="3.40.50.460">
    <property type="entry name" value="Phosphofructokinase domain"/>
    <property type="match status" value="1"/>
</dbReference>
<dbReference type="HAMAP" id="MF_00339">
    <property type="entry name" value="Phosphofructokinase_I_B1"/>
    <property type="match status" value="1"/>
</dbReference>
<dbReference type="InterPro" id="IPR022953">
    <property type="entry name" value="ATP_PFK"/>
</dbReference>
<dbReference type="InterPro" id="IPR012003">
    <property type="entry name" value="ATP_PFK_prok-type"/>
</dbReference>
<dbReference type="InterPro" id="IPR012828">
    <property type="entry name" value="PFKA_ATP_prok"/>
</dbReference>
<dbReference type="InterPro" id="IPR015912">
    <property type="entry name" value="Phosphofructokinase_CS"/>
</dbReference>
<dbReference type="InterPro" id="IPR000023">
    <property type="entry name" value="Phosphofructokinase_dom"/>
</dbReference>
<dbReference type="InterPro" id="IPR035966">
    <property type="entry name" value="PKF_sf"/>
</dbReference>
<dbReference type="NCBIfam" id="TIGR02482">
    <property type="entry name" value="PFKA_ATP"/>
    <property type="match status" value="1"/>
</dbReference>
<dbReference type="NCBIfam" id="NF002872">
    <property type="entry name" value="PRK03202.1"/>
    <property type="match status" value="1"/>
</dbReference>
<dbReference type="PANTHER" id="PTHR13697:SF4">
    <property type="entry name" value="ATP-DEPENDENT 6-PHOSPHOFRUCTOKINASE"/>
    <property type="match status" value="1"/>
</dbReference>
<dbReference type="PANTHER" id="PTHR13697">
    <property type="entry name" value="PHOSPHOFRUCTOKINASE"/>
    <property type="match status" value="1"/>
</dbReference>
<dbReference type="Pfam" id="PF00365">
    <property type="entry name" value="PFK"/>
    <property type="match status" value="1"/>
</dbReference>
<dbReference type="PIRSF" id="PIRSF000532">
    <property type="entry name" value="ATP_PFK_prok"/>
    <property type="match status" value="1"/>
</dbReference>
<dbReference type="PRINTS" id="PR00476">
    <property type="entry name" value="PHFRCTKINASE"/>
</dbReference>
<dbReference type="SUPFAM" id="SSF53784">
    <property type="entry name" value="Phosphofructokinase"/>
    <property type="match status" value="1"/>
</dbReference>
<dbReference type="PROSITE" id="PS00433">
    <property type="entry name" value="PHOSPHOFRUCTOKINASE"/>
    <property type="match status" value="1"/>
</dbReference>
<proteinExistence type="inferred from homology"/>
<feature type="chain" id="PRO_1000059791" description="ATP-dependent 6-phosphofructokinase">
    <location>
        <begin position="1"/>
        <end position="320"/>
    </location>
</feature>
<feature type="active site" description="Proton acceptor" evidence="1">
    <location>
        <position position="128"/>
    </location>
</feature>
<feature type="binding site" evidence="1">
    <location>
        <position position="12"/>
    </location>
    <ligand>
        <name>ATP</name>
        <dbReference type="ChEBI" id="CHEBI:30616"/>
    </ligand>
</feature>
<feature type="binding site" evidence="1">
    <location>
        <begin position="22"/>
        <end position="26"/>
    </location>
    <ligand>
        <name>ADP</name>
        <dbReference type="ChEBI" id="CHEBI:456216"/>
        <note>allosteric activator; ligand shared between dimeric partners</note>
    </ligand>
</feature>
<feature type="binding site" evidence="1">
    <location>
        <begin position="55"/>
        <end position="60"/>
    </location>
    <ligand>
        <name>ADP</name>
        <dbReference type="ChEBI" id="CHEBI:456216"/>
        <note>allosteric activator; ligand shared between dimeric partners</note>
    </ligand>
</feature>
<feature type="binding site" evidence="1">
    <location>
        <begin position="73"/>
        <end position="74"/>
    </location>
    <ligand>
        <name>ATP</name>
        <dbReference type="ChEBI" id="CHEBI:30616"/>
    </ligand>
</feature>
<feature type="binding site" evidence="1">
    <location>
        <begin position="103"/>
        <end position="106"/>
    </location>
    <ligand>
        <name>ATP</name>
        <dbReference type="ChEBI" id="CHEBI:30616"/>
    </ligand>
</feature>
<feature type="binding site" evidence="1">
    <location>
        <position position="104"/>
    </location>
    <ligand>
        <name>Mg(2+)</name>
        <dbReference type="ChEBI" id="CHEBI:18420"/>
        <note>catalytic</note>
    </ligand>
</feature>
<feature type="binding site" description="in other chain" evidence="1">
    <location>
        <begin position="126"/>
        <end position="128"/>
    </location>
    <ligand>
        <name>substrate</name>
        <note>ligand shared between dimeric partners</note>
    </ligand>
</feature>
<feature type="binding site" description="in other chain" evidence="1">
    <location>
        <position position="155"/>
    </location>
    <ligand>
        <name>ADP</name>
        <dbReference type="ChEBI" id="CHEBI:456216"/>
        <note>allosteric activator; ligand shared between dimeric partners</note>
    </ligand>
</feature>
<feature type="binding site" evidence="1">
    <location>
        <position position="163"/>
    </location>
    <ligand>
        <name>substrate</name>
        <note>ligand shared between dimeric partners</note>
    </ligand>
</feature>
<feature type="binding site" description="in other chain" evidence="1">
    <location>
        <begin position="170"/>
        <end position="172"/>
    </location>
    <ligand>
        <name>substrate</name>
        <note>ligand shared between dimeric partners</note>
    </ligand>
</feature>
<feature type="binding site" description="in other chain" evidence="1">
    <location>
        <begin position="186"/>
        <end position="188"/>
    </location>
    <ligand>
        <name>ADP</name>
        <dbReference type="ChEBI" id="CHEBI:456216"/>
        <note>allosteric activator; ligand shared between dimeric partners</note>
    </ligand>
</feature>
<feature type="binding site" description="in other chain" evidence="1">
    <location>
        <position position="212"/>
    </location>
    <ligand>
        <name>ADP</name>
        <dbReference type="ChEBI" id="CHEBI:456216"/>
        <note>allosteric activator; ligand shared between dimeric partners</note>
    </ligand>
</feature>
<feature type="binding site" description="in other chain" evidence="1">
    <location>
        <begin position="214"/>
        <end position="216"/>
    </location>
    <ligand>
        <name>ADP</name>
        <dbReference type="ChEBI" id="CHEBI:456216"/>
        <note>allosteric activator; ligand shared between dimeric partners</note>
    </ligand>
</feature>
<feature type="binding site" description="in other chain" evidence="1">
    <location>
        <position position="223"/>
    </location>
    <ligand>
        <name>substrate</name>
        <note>ligand shared between dimeric partners</note>
    </ligand>
</feature>
<feature type="binding site" evidence="1">
    <location>
        <position position="244"/>
    </location>
    <ligand>
        <name>substrate</name>
        <note>ligand shared between dimeric partners</note>
    </ligand>
</feature>
<feature type="binding site" description="in other chain" evidence="1">
    <location>
        <begin position="250"/>
        <end position="253"/>
    </location>
    <ligand>
        <name>substrate</name>
        <note>ligand shared between dimeric partners</note>
    </ligand>
</feature>
<gene>
    <name evidence="1" type="primary">pfkA</name>
    <name type="ordered locus">SG2178</name>
</gene>
<comment type="function">
    <text evidence="1">Catalyzes the phosphorylation of D-fructose 6-phosphate to fructose 1,6-bisphosphate by ATP, the first committing step of glycolysis.</text>
</comment>
<comment type="catalytic activity">
    <reaction evidence="1">
        <text>beta-D-fructose 6-phosphate + ATP = beta-D-fructose 1,6-bisphosphate + ADP + H(+)</text>
        <dbReference type="Rhea" id="RHEA:16109"/>
        <dbReference type="ChEBI" id="CHEBI:15378"/>
        <dbReference type="ChEBI" id="CHEBI:30616"/>
        <dbReference type="ChEBI" id="CHEBI:32966"/>
        <dbReference type="ChEBI" id="CHEBI:57634"/>
        <dbReference type="ChEBI" id="CHEBI:456216"/>
        <dbReference type="EC" id="2.7.1.11"/>
    </reaction>
</comment>
<comment type="cofactor">
    <cofactor evidence="1">
        <name>Mg(2+)</name>
        <dbReference type="ChEBI" id="CHEBI:18420"/>
    </cofactor>
</comment>
<comment type="activity regulation">
    <text evidence="1">Allosterically activated by ADP and other diphosphonucleosides, and allosterically inhibited by phosphoenolpyruvate.</text>
</comment>
<comment type="pathway">
    <text evidence="1">Carbohydrate degradation; glycolysis; D-glyceraldehyde 3-phosphate and glycerone phosphate from D-glucose: step 3/4.</text>
</comment>
<comment type="subunit">
    <text evidence="1">Homotetramer.</text>
</comment>
<comment type="subcellular location">
    <subcellularLocation>
        <location evidence="1">Cytoplasm</location>
    </subcellularLocation>
</comment>
<comment type="similarity">
    <text evidence="1">Belongs to the phosphofructokinase type A (PFKA) family. ATP-dependent PFK group I subfamily. Prokaryotic clade 'B1' sub-subfamily.</text>
</comment>
<accession>Q2NQX2</accession>
<evidence type="ECO:0000255" key="1">
    <source>
        <dbReference type="HAMAP-Rule" id="MF_00339"/>
    </source>
</evidence>
<name>PFKA_SODGM</name>
<protein>
    <recommendedName>
        <fullName evidence="1">ATP-dependent 6-phosphofructokinase</fullName>
        <shortName evidence="1">ATP-PFK</shortName>
        <shortName evidence="1">Phosphofructokinase</shortName>
        <ecNumber evidence="1">2.7.1.11</ecNumber>
    </recommendedName>
    <alternativeName>
        <fullName evidence="1">Phosphohexokinase</fullName>
    </alternativeName>
</protein>
<organism>
    <name type="scientific">Sodalis glossinidius (strain morsitans)</name>
    <dbReference type="NCBI Taxonomy" id="343509"/>
    <lineage>
        <taxon>Bacteria</taxon>
        <taxon>Pseudomonadati</taxon>
        <taxon>Pseudomonadota</taxon>
        <taxon>Gammaproteobacteria</taxon>
        <taxon>Enterobacterales</taxon>
        <taxon>Bruguierivoracaceae</taxon>
        <taxon>Sodalis</taxon>
    </lineage>
</organism>